<feature type="chain" id="PRO_0000095930" description="Translation initiation factor IF-1, chloroplastic">
    <location>
        <begin position="1"/>
        <end position="77"/>
    </location>
</feature>
<feature type="domain" description="S1-like" evidence="1">
    <location>
        <begin position="1"/>
        <end position="71"/>
    </location>
</feature>
<reference key="1">
    <citation type="journal article" date="2001" name="Plant Cell">
        <title>Many parallel losses of infA from chloroplast DNA during angiosperm evolution with multiple independent transfers to the nucleus.</title>
        <authorList>
            <person name="Millen R.S."/>
            <person name="Olmstead R.G."/>
            <person name="Adams K.L."/>
            <person name="Palmer J.D."/>
            <person name="Lao N.T."/>
            <person name="Heggie L."/>
            <person name="Kavanagh T.A."/>
            <person name="Hibberd J.M."/>
            <person name="Gray J.C."/>
            <person name="Morden C.W."/>
            <person name="Calie P.J."/>
            <person name="Jermiin L.S."/>
            <person name="Wolfe K.H."/>
        </authorList>
    </citation>
    <scope>NUCLEOTIDE SEQUENCE [GENOMIC DNA]</scope>
</reference>
<name>IF1C_GAREL</name>
<sequence>MKEQKWIHEGLITESLPNGMFRVRLDNEDLILGYVSGKIRRSFMRILPGDRVKVEVSRYDSTRGRIIYRLRNKDSKD</sequence>
<dbReference type="EMBL" id="AF347638">
    <property type="protein sequence ID" value="AAK38861.1"/>
    <property type="molecule type" value="Genomic_DNA"/>
</dbReference>
<dbReference type="SMR" id="Q95GM4"/>
<dbReference type="GO" id="GO:0009507">
    <property type="term" value="C:chloroplast"/>
    <property type="evidence" value="ECO:0007669"/>
    <property type="project" value="UniProtKB-SubCell"/>
</dbReference>
<dbReference type="GO" id="GO:0005829">
    <property type="term" value="C:cytosol"/>
    <property type="evidence" value="ECO:0007669"/>
    <property type="project" value="TreeGrafter"/>
</dbReference>
<dbReference type="GO" id="GO:0043022">
    <property type="term" value="F:ribosome binding"/>
    <property type="evidence" value="ECO:0007669"/>
    <property type="project" value="UniProtKB-UniRule"/>
</dbReference>
<dbReference type="GO" id="GO:0019843">
    <property type="term" value="F:rRNA binding"/>
    <property type="evidence" value="ECO:0007669"/>
    <property type="project" value="UniProtKB-UniRule"/>
</dbReference>
<dbReference type="GO" id="GO:0003743">
    <property type="term" value="F:translation initiation factor activity"/>
    <property type="evidence" value="ECO:0007669"/>
    <property type="project" value="UniProtKB-UniRule"/>
</dbReference>
<dbReference type="CDD" id="cd04451">
    <property type="entry name" value="S1_IF1"/>
    <property type="match status" value="1"/>
</dbReference>
<dbReference type="FunFam" id="2.40.50.140:FF:000019">
    <property type="entry name" value="Translation initiation factor IF-1, chloroplastic"/>
    <property type="match status" value="1"/>
</dbReference>
<dbReference type="Gene3D" id="2.40.50.140">
    <property type="entry name" value="Nucleic acid-binding proteins"/>
    <property type="match status" value="1"/>
</dbReference>
<dbReference type="HAMAP" id="MF_00075">
    <property type="entry name" value="IF_1"/>
    <property type="match status" value="1"/>
</dbReference>
<dbReference type="InterPro" id="IPR012340">
    <property type="entry name" value="NA-bd_OB-fold"/>
</dbReference>
<dbReference type="InterPro" id="IPR006196">
    <property type="entry name" value="RNA-binding_domain_S1_IF1"/>
</dbReference>
<dbReference type="InterPro" id="IPR003029">
    <property type="entry name" value="S1_domain"/>
</dbReference>
<dbReference type="InterPro" id="IPR004368">
    <property type="entry name" value="TIF_IF1"/>
</dbReference>
<dbReference type="NCBIfam" id="TIGR00008">
    <property type="entry name" value="infA"/>
    <property type="match status" value="1"/>
</dbReference>
<dbReference type="PANTHER" id="PTHR33370">
    <property type="entry name" value="TRANSLATION INITIATION FACTOR IF-1, CHLOROPLASTIC"/>
    <property type="match status" value="1"/>
</dbReference>
<dbReference type="PANTHER" id="PTHR33370:SF1">
    <property type="entry name" value="TRANSLATION INITIATION FACTOR IF-1, CHLOROPLASTIC"/>
    <property type="match status" value="1"/>
</dbReference>
<dbReference type="Pfam" id="PF01176">
    <property type="entry name" value="eIF-1a"/>
    <property type="match status" value="1"/>
</dbReference>
<dbReference type="SMART" id="SM00316">
    <property type="entry name" value="S1"/>
    <property type="match status" value="1"/>
</dbReference>
<dbReference type="SUPFAM" id="SSF50249">
    <property type="entry name" value="Nucleic acid-binding proteins"/>
    <property type="match status" value="1"/>
</dbReference>
<dbReference type="PROSITE" id="PS50832">
    <property type="entry name" value="S1_IF1_TYPE"/>
    <property type="match status" value="1"/>
</dbReference>
<gene>
    <name evidence="1" type="primary">infA</name>
</gene>
<protein>
    <recommendedName>
        <fullName evidence="1">Translation initiation factor IF-1, chloroplastic</fullName>
    </recommendedName>
</protein>
<keyword id="KW-0150">Chloroplast</keyword>
<keyword id="KW-0396">Initiation factor</keyword>
<keyword id="KW-0934">Plastid</keyword>
<keyword id="KW-0648">Protein biosynthesis</keyword>
<keyword id="KW-0694">RNA-binding</keyword>
<keyword id="KW-0699">rRNA-binding</keyword>
<organism>
    <name type="scientific">Garrya elliptica</name>
    <name type="common">Wavyleaf silktassel</name>
    <dbReference type="NCBI Taxonomy" id="4288"/>
    <lineage>
        <taxon>Eukaryota</taxon>
        <taxon>Viridiplantae</taxon>
        <taxon>Streptophyta</taxon>
        <taxon>Embryophyta</taxon>
        <taxon>Tracheophyta</taxon>
        <taxon>Spermatophyta</taxon>
        <taxon>Magnoliopsida</taxon>
        <taxon>eudicotyledons</taxon>
        <taxon>Gunneridae</taxon>
        <taxon>Pentapetalae</taxon>
        <taxon>asterids</taxon>
        <taxon>lamiids</taxon>
        <taxon>Garryales</taxon>
        <taxon>Garryaceae</taxon>
        <taxon>Garrya</taxon>
    </lineage>
</organism>
<comment type="function">
    <text evidence="1">One of the essential components for the initiation of protein synthesis. Stabilizes the binding of IF-2 and IF-3 on the 30S subunit to which N-formylmethionyl-tRNA(fMet) subsequently binds. Helps modulate mRNA selection, yielding the 30S pre-initiation complex (PIC). Upon addition of the 50S ribosomal subunit IF-1, IF-2 and IF-3 are released leaving the mature 70S translation initiation complex.</text>
</comment>
<comment type="subunit">
    <text evidence="1">Component of the 30S ribosomal translation pre-initiation complex which assembles on the 30S ribosome in the order IF-2 and IF-3, IF-1 and N-formylmethionyl-tRNA(fMet); mRNA recruitment can occur at any time during PIC assembly.</text>
</comment>
<comment type="subcellular location">
    <subcellularLocation>
        <location evidence="1">Plastid</location>
        <location evidence="1">Chloroplast</location>
    </subcellularLocation>
</comment>
<comment type="similarity">
    <text evidence="1">Belongs to the IF-1 family.</text>
</comment>
<evidence type="ECO:0000255" key="1">
    <source>
        <dbReference type="HAMAP-Rule" id="MF_00075"/>
    </source>
</evidence>
<geneLocation type="chloroplast"/>
<proteinExistence type="inferred from homology"/>
<accession>Q95GM4</accession>